<gene>
    <name evidence="1" type="primary">rps8e</name>
    <name type="ordered locus">TGAM_0646</name>
</gene>
<proteinExistence type="inferred from homology"/>
<reference key="1">
    <citation type="journal article" date="2007" name="Genome Biol.">
        <title>Genome analysis and genome-wide proteomics of Thermococcus gammatolerans, the most radioresistant organism known amongst the Archaea.</title>
        <authorList>
            <person name="Zivanovic Y."/>
            <person name="Armengaud J."/>
            <person name="Lagorce A."/>
            <person name="Leplat C."/>
            <person name="Guerin P."/>
            <person name="Dutertre M."/>
            <person name="Anthouard V."/>
            <person name="Forterre P."/>
            <person name="Wincker P."/>
            <person name="Confalonieri F."/>
        </authorList>
    </citation>
    <scope>NUCLEOTIDE SEQUENCE [LARGE SCALE GENOMIC DNA]</scope>
    <source>
        <strain>DSM 15229 / JCM 11827 / EJ3</strain>
    </source>
</reference>
<evidence type="ECO:0000255" key="1">
    <source>
        <dbReference type="HAMAP-Rule" id="MF_00029"/>
    </source>
</evidence>
<evidence type="ECO:0000305" key="2"/>
<dbReference type="EMBL" id="CP001398">
    <property type="protein sequence ID" value="ACS33148.1"/>
    <property type="molecule type" value="Genomic_DNA"/>
</dbReference>
<dbReference type="RefSeq" id="WP_015858266.1">
    <property type="nucleotide sequence ID" value="NC_012804.1"/>
</dbReference>
<dbReference type="SMR" id="C5A4I6"/>
<dbReference type="STRING" id="593117.TGAM_0646"/>
<dbReference type="PaxDb" id="593117-TGAM_0646"/>
<dbReference type="GeneID" id="7988860"/>
<dbReference type="KEGG" id="tga:TGAM_0646"/>
<dbReference type="PATRIC" id="fig|593117.10.peg.644"/>
<dbReference type="eggNOG" id="arCOG04154">
    <property type="taxonomic scope" value="Archaea"/>
</dbReference>
<dbReference type="HOGENOM" id="CLU_080597_2_1_2"/>
<dbReference type="OrthoDB" id="372305at2157"/>
<dbReference type="Proteomes" id="UP000001488">
    <property type="component" value="Chromosome"/>
</dbReference>
<dbReference type="GO" id="GO:1990904">
    <property type="term" value="C:ribonucleoprotein complex"/>
    <property type="evidence" value="ECO:0007669"/>
    <property type="project" value="UniProtKB-KW"/>
</dbReference>
<dbReference type="GO" id="GO:0005840">
    <property type="term" value="C:ribosome"/>
    <property type="evidence" value="ECO:0007669"/>
    <property type="project" value="UniProtKB-KW"/>
</dbReference>
<dbReference type="GO" id="GO:0003735">
    <property type="term" value="F:structural constituent of ribosome"/>
    <property type="evidence" value="ECO:0007669"/>
    <property type="project" value="InterPro"/>
</dbReference>
<dbReference type="GO" id="GO:0006412">
    <property type="term" value="P:translation"/>
    <property type="evidence" value="ECO:0007669"/>
    <property type="project" value="UniProtKB-UniRule"/>
</dbReference>
<dbReference type="CDD" id="cd11382">
    <property type="entry name" value="Ribosomal_S8e"/>
    <property type="match status" value="1"/>
</dbReference>
<dbReference type="FunFam" id="2.40.10.310:FF:000002">
    <property type="entry name" value="30S ribosomal protein S8e"/>
    <property type="match status" value="1"/>
</dbReference>
<dbReference type="Gene3D" id="2.40.10.310">
    <property type="match status" value="1"/>
</dbReference>
<dbReference type="HAMAP" id="MF_00029">
    <property type="entry name" value="Ribosomal_eS8"/>
    <property type="match status" value="1"/>
</dbReference>
<dbReference type="InterPro" id="IPR001047">
    <property type="entry name" value="Ribosomal_eS8"/>
</dbReference>
<dbReference type="InterPro" id="IPR018283">
    <property type="entry name" value="Ribosomal_eS8_CS"/>
</dbReference>
<dbReference type="InterPro" id="IPR020919">
    <property type="entry name" value="Ribosomal_protein_eS8_arc"/>
</dbReference>
<dbReference type="InterPro" id="IPR022309">
    <property type="entry name" value="Ribosomal_Se8/biogenesis_NSA2"/>
</dbReference>
<dbReference type="NCBIfam" id="TIGR00307">
    <property type="entry name" value="eS8"/>
    <property type="match status" value="1"/>
</dbReference>
<dbReference type="PANTHER" id="PTHR10394">
    <property type="entry name" value="40S RIBOSOMAL PROTEIN S8"/>
    <property type="match status" value="1"/>
</dbReference>
<dbReference type="Pfam" id="PF01201">
    <property type="entry name" value="Ribosomal_S8e"/>
    <property type="match status" value="1"/>
</dbReference>
<dbReference type="PROSITE" id="PS01193">
    <property type="entry name" value="RIBOSOMAL_S8E"/>
    <property type="match status" value="1"/>
</dbReference>
<accession>C5A4I6</accession>
<keyword id="KW-1185">Reference proteome</keyword>
<keyword id="KW-0687">Ribonucleoprotein</keyword>
<keyword id="KW-0689">Ribosomal protein</keyword>
<sequence>MAIWQGRSLKKPSGGRIVLARKKRKRELGREPANTRVAEEREKRKIIRTYGGNRKVRLVEALYANVFEGGKGRKVKILNVVENPANRQYARRNIITKGAIIETEIGKAVVTSRPGQDGVVNAVLLKEENA</sequence>
<feature type="chain" id="PRO_1000201980" description="Small ribosomal subunit protein eS8">
    <location>
        <begin position="1"/>
        <end position="130"/>
    </location>
</feature>
<comment type="subunit">
    <text evidence="1">Part of the 30S ribosomal subunit.</text>
</comment>
<comment type="similarity">
    <text evidence="1">Belongs to the eukaryotic ribosomal protein eS8 family.</text>
</comment>
<name>RS8E_THEGJ</name>
<organism>
    <name type="scientific">Thermococcus gammatolerans (strain DSM 15229 / JCM 11827 / EJ3)</name>
    <dbReference type="NCBI Taxonomy" id="593117"/>
    <lineage>
        <taxon>Archaea</taxon>
        <taxon>Methanobacteriati</taxon>
        <taxon>Methanobacteriota</taxon>
        <taxon>Thermococci</taxon>
        <taxon>Thermococcales</taxon>
        <taxon>Thermococcaceae</taxon>
        <taxon>Thermococcus</taxon>
    </lineage>
</organism>
<protein>
    <recommendedName>
        <fullName evidence="1">Small ribosomal subunit protein eS8</fullName>
    </recommendedName>
    <alternativeName>
        <fullName evidence="2">30S ribosomal protein S8e</fullName>
    </alternativeName>
</protein>